<protein>
    <recommendedName>
        <fullName evidence="1">Recombination protein RecR</fullName>
    </recommendedName>
</protein>
<accession>A5UA46</accession>
<comment type="function">
    <text evidence="1">May play a role in DNA repair. It seems to be involved in an RecBC-independent recombinational process of DNA repair. It may act with RecF and RecO.</text>
</comment>
<comment type="similarity">
    <text evidence="1">Belongs to the RecR family.</text>
</comment>
<dbReference type="EMBL" id="CP000671">
    <property type="protein sequence ID" value="ABQ97647.1"/>
    <property type="molecule type" value="Genomic_DNA"/>
</dbReference>
<dbReference type="SMR" id="A5UA46"/>
<dbReference type="KEGG" id="hip:CGSHiEE_00775"/>
<dbReference type="HOGENOM" id="CLU_060739_1_2_6"/>
<dbReference type="GO" id="GO:0003677">
    <property type="term" value="F:DNA binding"/>
    <property type="evidence" value="ECO:0007669"/>
    <property type="project" value="UniProtKB-UniRule"/>
</dbReference>
<dbReference type="GO" id="GO:0008270">
    <property type="term" value="F:zinc ion binding"/>
    <property type="evidence" value="ECO:0007669"/>
    <property type="project" value="UniProtKB-KW"/>
</dbReference>
<dbReference type="GO" id="GO:0006310">
    <property type="term" value="P:DNA recombination"/>
    <property type="evidence" value="ECO:0007669"/>
    <property type="project" value="UniProtKB-UniRule"/>
</dbReference>
<dbReference type="GO" id="GO:0006281">
    <property type="term" value="P:DNA repair"/>
    <property type="evidence" value="ECO:0007669"/>
    <property type="project" value="UniProtKB-UniRule"/>
</dbReference>
<dbReference type="CDD" id="cd01025">
    <property type="entry name" value="TOPRIM_recR"/>
    <property type="match status" value="1"/>
</dbReference>
<dbReference type="FunFam" id="1.10.8.420:FF:000001">
    <property type="entry name" value="Recombination protein RecR"/>
    <property type="match status" value="1"/>
</dbReference>
<dbReference type="FunFam" id="3.40.1360.10:FF:000001">
    <property type="entry name" value="Recombination protein RecR"/>
    <property type="match status" value="1"/>
</dbReference>
<dbReference type="Gene3D" id="3.40.1360.10">
    <property type="match status" value="1"/>
</dbReference>
<dbReference type="Gene3D" id="6.10.250.240">
    <property type="match status" value="1"/>
</dbReference>
<dbReference type="Gene3D" id="1.10.8.420">
    <property type="entry name" value="RecR Domain 1"/>
    <property type="match status" value="1"/>
</dbReference>
<dbReference type="HAMAP" id="MF_00017">
    <property type="entry name" value="RecR"/>
    <property type="match status" value="1"/>
</dbReference>
<dbReference type="InterPro" id="IPR000093">
    <property type="entry name" value="DNA_Rcmb_RecR"/>
</dbReference>
<dbReference type="InterPro" id="IPR023627">
    <property type="entry name" value="Rcmb_RecR"/>
</dbReference>
<dbReference type="InterPro" id="IPR015967">
    <property type="entry name" value="Rcmb_RecR_Znf"/>
</dbReference>
<dbReference type="InterPro" id="IPR006171">
    <property type="entry name" value="TOPRIM_dom"/>
</dbReference>
<dbReference type="InterPro" id="IPR034137">
    <property type="entry name" value="TOPRIM_RecR"/>
</dbReference>
<dbReference type="NCBIfam" id="TIGR00615">
    <property type="entry name" value="recR"/>
    <property type="match status" value="1"/>
</dbReference>
<dbReference type="PANTHER" id="PTHR30446">
    <property type="entry name" value="RECOMBINATION PROTEIN RECR"/>
    <property type="match status" value="1"/>
</dbReference>
<dbReference type="PANTHER" id="PTHR30446:SF0">
    <property type="entry name" value="RECOMBINATION PROTEIN RECR"/>
    <property type="match status" value="1"/>
</dbReference>
<dbReference type="Pfam" id="PF21175">
    <property type="entry name" value="RecR_C"/>
    <property type="match status" value="1"/>
</dbReference>
<dbReference type="Pfam" id="PF21176">
    <property type="entry name" value="RecR_HhH"/>
    <property type="match status" value="1"/>
</dbReference>
<dbReference type="Pfam" id="PF02132">
    <property type="entry name" value="RecR_ZnF"/>
    <property type="match status" value="1"/>
</dbReference>
<dbReference type="Pfam" id="PF13662">
    <property type="entry name" value="Toprim_4"/>
    <property type="match status" value="1"/>
</dbReference>
<dbReference type="SMART" id="SM00493">
    <property type="entry name" value="TOPRIM"/>
    <property type="match status" value="1"/>
</dbReference>
<dbReference type="SUPFAM" id="SSF111304">
    <property type="entry name" value="Recombination protein RecR"/>
    <property type="match status" value="1"/>
</dbReference>
<dbReference type="PROSITE" id="PS01300">
    <property type="entry name" value="RECR"/>
    <property type="match status" value="1"/>
</dbReference>
<dbReference type="PROSITE" id="PS50880">
    <property type="entry name" value="TOPRIM"/>
    <property type="match status" value="1"/>
</dbReference>
<sequence length="200" mass="22107">MQSSPLLEHLIENLRCLPGVGPKSAQRMAYHLLQRNRSGGMNLARALTEAMSKIGHCSQCRDFTEEDTCNICNNPRRQNSGLLCVVEMPADIQAIEQTGQFSGRYFVLMGHLSPLDGIGPREIGLDLLQKRLVEESFHEVILATNPTVEGDATANYIAEMCRQHNIKVSRIAHGIPVGGELETVDGTTLTHSFLGRRQID</sequence>
<organism>
    <name type="scientific">Haemophilus influenzae (strain PittEE)</name>
    <dbReference type="NCBI Taxonomy" id="374930"/>
    <lineage>
        <taxon>Bacteria</taxon>
        <taxon>Pseudomonadati</taxon>
        <taxon>Pseudomonadota</taxon>
        <taxon>Gammaproteobacteria</taxon>
        <taxon>Pasteurellales</taxon>
        <taxon>Pasteurellaceae</taxon>
        <taxon>Haemophilus</taxon>
    </lineage>
</organism>
<proteinExistence type="inferred from homology"/>
<reference key="1">
    <citation type="journal article" date="2007" name="Genome Biol.">
        <title>Characterization and modeling of the Haemophilus influenzae core and supragenomes based on the complete genomic sequences of Rd and 12 clinical nontypeable strains.</title>
        <authorList>
            <person name="Hogg J.S."/>
            <person name="Hu F.Z."/>
            <person name="Janto B."/>
            <person name="Boissy R."/>
            <person name="Hayes J."/>
            <person name="Keefe R."/>
            <person name="Post J.C."/>
            <person name="Ehrlich G.D."/>
        </authorList>
    </citation>
    <scope>NUCLEOTIDE SEQUENCE [LARGE SCALE GENOMIC DNA]</scope>
    <source>
        <strain>PittEE</strain>
    </source>
</reference>
<name>RECR_HAEIE</name>
<gene>
    <name evidence="1" type="primary">recR</name>
    <name type="ordered locus">CGSHiEE_00775</name>
</gene>
<evidence type="ECO:0000255" key="1">
    <source>
        <dbReference type="HAMAP-Rule" id="MF_00017"/>
    </source>
</evidence>
<feature type="chain" id="PRO_1000001548" description="Recombination protein RecR">
    <location>
        <begin position="1"/>
        <end position="200"/>
    </location>
</feature>
<feature type="domain" description="Toprim" evidence="1">
    <location>
        <begin position="81"/>
        <end position="176"/>
    </location>
</feature>
<feature type="zinc finger region" description="C4-type" evidence="1">
    <location>
        <begin position="57"/>
        <end position="72"/>
    </location>
</feature>
<keyword id="KW-0227">DNA damage</keyword>
<keyword id="KW-0233">DNA recombination</keyword>
<keyword id="KW-0234">DNA repair</keyword>
<keyword id="KW-0479">Metal-binding</keyword>
<keyword id="KW-0862">Zinc</keyword>
<keyword id="KW-0863">Zinc-finger</keyword>